<gene>
    <name evidence="1" type="primary">ihfA</name>
    <name evidence="1" type="synonym">himA</name>
    <name type="ordered locus">Patl_2493</name>
</gene>
<feature type="chain" id="PRO_0000277754" description="Integration host factor subunit alpha">
    <location>
        <begin position="1"/>
        <end position="98"/>
    </location>
</feature>
<feature type="region of interest" description="Disordered" evidence="2">
    <location>
        <begin position="52"/>
        <end position="73"/>
    </location>
</feature>
<feature type="compositionally biased region" description="Basic and acidic residues" evidence="2">
    <location>
        <begin position="54"/>
        <end position="73"/>
    </location>
</feature>
<protein>
    <recommendedName>
        <fullName evidence="1">Integration host factor subunit alpha</fullName>
        <shortName evidence="1">IHF-alpha</shortName>
    </recommendedName>
</protein>
<sequence>MALTKAEMAEHLFEKLGMNKRDAKDLVEAFFEEVREALESGEQVKLSGFGNFDLRQKSERPGRNPKTGEDIPIKARRVVTFRPGQKLKSRVENTKPTE</sequence>
<evidence type="ECO:0000255" key="1">
    <source>
        <dbReference type="HAMAP-Rule" id="MF_00380"/>
    </source>
</evidence>
<evidence type="ECO:0000256" key="2">
    <source>
        <dbReference type="SAM" id="MobiDB-lite"/>
    </source>
</evidence>
<comment type="function">
    <text evidence="1">This protein is one of the two subunits of integration host factor, a specific DNA-binding protein that functions in genetic recombination as well as in transcriptional and translational control.</text>
</comment>
<comment type="subunit">
    <text evidence="1">Heterodimer of an alpha and a beta chain.</text>
</comment>
<comment type="similarity">
    <text evidence="1">Belongs to the bacterial histone-like protein family.</text>
</comment>
<name>IHFA_PSEA6</name>
<keyword id="KW-0233">DNA recombination</keyword>
<keyword id="KW-0238">DNA-binding</keyword>
<keyword id="KW-0804">Transcription</keyword>
<keyword id="KW-0805">Transcription regulation</keyword>
<keyword id="KW-0810">Translation regulation</keyword>
<dbReference type="EMBL" id="CP000388">
    <property type="protein sequence ID" value="ABG41009.1"/>
    <property type="molecule type" value="Genomic_DNA"/>
</dbReference>
<dbReference type="RefSeq" id="WP_006991121.1">
    <property type="nucleotide sequence ID" value="NC_008228.1"/>
</dbReference>
<dbReference type="SMR" id="Q15SX9"/>
<dbReference type="STRING" id="342610.Patl_2493"/>
<dbReference type="KEGG" id="pat:Patl_2493"/>
<dbReference type="eggNOG" id="COG0776">
    <property type="taxonomic scope" value="Bacteria"/>
</dbReference>
<dbReference type="HOGENOM" id="CLU_105066_1_3_6"/>
<dbReference type="OrthoDB" id="9797747at2"/>
<dbReference type="Proteomes" id="UP000001981">
    <property type="component" value="Chromosome"/>
</dbReference>
<dbReference type="GO" id="GO:0005829">
    <property type="term" value="C:cytosol"/>
    <property type="evidence" value="ECO:0007669"/>
    <property type="project" value="TreeGrafter"/>
</dbReference>
<dbReference type="GO" id="GO:0003677">
    <property type="term" value="F:DNA binding"/>
    <property type="evidence" value="ECO:0007669"/>
    <property type="project" value="UniProtKB-UniRule"/>
</dbReference>
<dbReference type="GO" id="GO:0030527">
    <property type="term" value="F:structural constituent of chromatin"/>
    <property type="evidence" value="ECO:0007669"/>
    <property type="project" value="InterPro"/>
</dbReference>
<dbReference type="GO" id="GO:0006310">
    <property type="term" value="P:DNA recombination"/>
    <property type="evidence" value="ECO:0007669"/>
    <property type="project" value="UniProtKB-UniRule"/>
</dbReference>
<dbReference type="GO" id="GO:0009893">
    <property type="term" value="P:positive regulation of metabolic process"/>
    <property type="evidence" value="ECO:0007669"/>
    <property type="project" value="UniProtKB-ARBA"/>
</dbReference>
<dbReference type="GO" id="GO:0006355">
    <property type="term" value="P:regulation of DNA-templated transcription"/>
    <property type="evidence" value="ECO:0007669"/>
    <property type="project" value="UniProtKB-UniRule"/>
</dbReference>
<dbReference type="GO" id="GO:0006417">
    <property type="term" value="P:regulation of translation"/>
    <property type="evidence" value="ECO:0007669"/>
    <property type="project" value="UniProtKB-UniRule"/>
</dbReference>
<dbReference type="CDD" id="cd13835">
    <property type="entry name" value="IHF_A"/>
    <property type="match status" value="1"/>
</dbReference>
<dbReference type="FunFam" id="4.10.520.10:FF:000002">
    <property type="entry name" value="Integration host factor subunit alpha"/>
    <property type="match status" value="1"/>
</dbReference>
<dbReference type="Gene3D" id="4.10.520.10">
    <property type="entry name" value="IHF-like DNA-binding proteins"/>
    <property type="match status" value="1"/>
</dbReference>
<dbReference type="HAMAP" id="MF_00380">
    <property type="entry name" value="IHF_alpha"/>
    <property type="match status" value="1"/>
</dbReference>
<dbReference type="InterPro" id="IPR000119">
    <property type="entry name" value="Hist_DNA-bd"/>
</dbReference>
<dbReference type="InterPro" id="IPR020816">
    <property type="entry name" value="Histone-like_DNA-bd_CS"/>
</dbReference>
<dbReference type="InterPro" id="IPR010992">
    <property type="entry name" value="IHF-like_DNA-bd_dom_sf"/>
</dbReference>
<dbReference type="InterPro" id="IPR005684">
    <property type="entry name" value="IHF_alpha"/>
</dbReference>
<dbReference type="NCBIfam" id="TIGR00987">
    <property type="entry name" value="himA"/>
    <property type="match status" value="1"/>
</dbReference>
<dbReference type="NCBIfam" id="NF001401">
    <property type="entry name" value="PRK00285.1"/>
    <property type="match status" value="1"/>
</dbReference>
<dbReference type="PANTHER" id="PTHR33175">
    <property type="entry name" value="DNA-BINDING PROTEIN HU"/>
    <property type="match status" value="1"/>
</dbReference>
<dbReference type="PANTHER" id="PTHR33175:SF2">
    <property type="entry name" value="INTEGRATION HOST FACTOR SUBUNIT ALPHA"/>
    <property type="match status" value="1"/>
</dbReference>
<dbReference type="Pfam" id="PF00216">
    <property type="entry name" value="Bac_DNA_binding"/>
    <property type="match status" value="1"/>
</dbReference>
<dbReference type="PRINTS" id="PR01727">
    <property type="entry name" value="DNABINDINGHU"/>
</dbReference>
<dbReference type="SMART" id="SM00411">
    <property type="entry name" value="BHL"/>
    <property type="match status" value="1"/>
</dbReference>
<dbReference type="SUPFAM" id="SSF47729">
    <property type="entry name" value="IHF-like DNA-binding proteins"/>
    <property type="match status" value="1"/>
</dbReference>
<dbReference type="PROSITE" id="PS00045">
    <property type="entry name" value="HISTONE_LIKE"/>
    <property type="match status" value="1"/>
</dbReference>
<reference key="1">
    <citation type="submission" date="2006-06" db="EMBL/GenBank/DDBJ databases">
        <title>Complete sequence of Pseudoalteromonas atlantica T6c.</title>
        <authorList>
            <consortium name="US DOE Joint Genome Institute"/>
            <person name="Copeland A."/>
            <person name="Lucas S."/>
            <person name="Lapidus A."/>
            <person name="Barry K."/>
            <person name="Detter J.C."/>
            <person name="Glavina del Rio T."/>
            <person name="Hammon N."/>
            <person name="Israni S."/>
            <person name="Dalin E."/>
            <person name="Tice H."/>
            <person name="Pitluck S."/>
            <person name="Saunders E."/>
            <person name="Brettin T."/>
            <person name="Bruce D."/>
            <person name="Han C."/>
            <person name="Tapia R."/>
            <person name="Gilna P."/>
            <person name="Schmutz J."/>
            <person name="Larimer F."/>
            <person name="Land M."/>
            <person name="Hauser L."/>
            <person name="Kyrpides N."/>
            <person name="Kim E."/>
            <person name="Karls A.C."/>
            <person name="Bartlett D."/>
            <person name="Higgins B.P."/>
            <person name="Richardson P."/>
        </authorList>
    </citation>
    <scope>NUCLEOTIDE SEQUENCE [LARGE SCALE GENOMIC DNA]</scope>
    <source>
        <strain>T6c / ATCC BAA-1087</strain>
    </source>
</reference>
<organism>
    <name type="scientific">Pseudoalteromonas atlantica (strain T6c / ATCC BAA-1087)</name>
    <dbReference type="NCBI Taxonomy" id="3042615"/>
    <lineage>
        <taxon>Bacteria</taxon>
        <taxon>Pseudomonadati</taxon>
        <taxon>Pseudomonadota</taxon>
        <taxon>Gammaproteobacteria</taxon>
        <taxon>Alteromonadales</taxon>
        <taxon>Alteromonadaceae</taxon>
        <taxon>Paraglaciecola</taxon>
    </lineage>
</organism>
<proteinExistence type="inferred from homology"/>
<accession>Q15SX9</accession>